<gene>
    <name type="ordered locus">Ba71V-076</name>
    <name type="ORF">B169L</name>
</gene>
<accession>Q65166</accession>
<sequence>MNVDFIAGINNLGEKIYTCEPFKTSFQNPFIVALIITAVVLVVFFAICNPPVDKKRKTKTAIYVYICIVALLFLHYYVLNHQLNDIYNKSNMDVIVSSIHDKYKGGDEIIPPISPPSVSNELEEDQPKKIPAGPKPAGPKPADSKPASSADSKPLVPLQEVIMPSQYNN</sequence>
<organismHost>
    <name type="scientific">Ornithodoros</name>
    <name type="common">relapsing fever ticks</name>
    <dbReference type="NCBI Taxonomy" id="6937"/>
</organismHost>
<organismHost>
    <name type="scientific">Sus scrofa</name>
    <name type="common">Pig</name>
    <dbReference type="NCBI Taxonomy" id="9823"/>
</organismHost>
<protein>
    <recommendedName>
        <fullName>Transmembrane protein B169L</fullName>
        <shortName>pB169L</shortName>
    </recommendedName>
</protein>
<name>VF169_ASFB7</name>
<dbReference type="EMBL" id="U18466">
    <property type="protein sequence ID" value="AAA65306.1"/>
    <property type="molecule type" value="Genomic_DNA"/>
</dbReference>
<dbReference type="RefSeq" id="NP_042770.1">
    <property type="nucleotide sequence ID" value="NC_001659.2"/>
</dbReference>
<dbReference type="SMR" id="Q65166"/>
<dbReference type="GeneID" id="22220306"/>
<dbReference type="KEGG" id="vg:22220306"/>
<dbReference type="Proteomes" id="UP000000624">
    <property type="component" value="Segment"/>
</dbReference>
<dbReference type="GO" id="GO:0033644">
    <property type="term" value="C:host cell membrane"/>
    <property type="evidence" value="ECO:0007669"/>
    <property type="project" value="UniProtKB-SubCell"/>
</dbReference>
<dbReference type="GO" id="GO:0016020">
    <property type="term" value="C:membrane"/>
    <property type="evidence" value="ECO:0007669"/>
    <property type="project" value="UniProtKB-KW"/>
</dbReference>
<dbReference type="GO" id="GO:0044423">
    <property type="term" value="C:virion component"/>
    <property type="evidence" value="ECO:0007669"/>
    <property type="project" value="UniProtKB-KW"/>
</dbReference>
<evidence type="ECO:0000255" key="1"/>
<evidence type="ECO:0000256" key="2">
    <source>
        <dbReference type="SAM" id="MobiDB-lite"/>
    </source>
</evidence>
<evidence type="ECO:0000269" key="3">
    <source>
    </source>
</evidence>
<evidence type="ECO:0000269" key="4">
    <source>
    </source>
</evidence>
<evidence type="ECO:0000305" key="5"/>
<reference key="1">
    <citation type="journal article" date="1995" name="Virology">
        <title>Analysis of the complete nucleotide sequence of African swine fever virus.</title>
        <authorList>
            <person name="Yanez R.J."/>
            <person name="Rodriguez J.M."/>
            <person name="Nogal M.L."/>
            <person name="Yuste L."/>
            <person name="Enriquez C."/>
            <person name="Rodriguez J.F."/>
            <person name="Vinuela E."/>
        </authorList>
    </citation>
    <scope>NUCLEOTIDE SEQUENCE [LARGE SCALE GENOMIC DNA]</scope>
</reference>
<reference key="2">
    <citation type="journal article" date="2018" name="J. Virol.">
        <title>A Proteomic Atlas of the African Swine Fever Virus Particle.</title>
        <authorList>
            <person name="Alejo A."/>
            <person name="Matamoros T."/>
            <person name="Guerra M."/>
            <person name="Andres G."/>
        </authorList>
    </citation>
    <scope>SUBCELLULAR LOCATION</scope>
</reference>
<reference key="3">
    <citation type="journal article" date="2020" name="J. Virol.">
        <title>The African Swine Fever Virus Transcriptome.</title>
        <authorList>
            <person name="Cackett G."/>
            <person name="Matelska D."/>
            <person name="Sykora M."/>
            <person name="Portugal R."/>
            <person name="Malecki M."/>
            <person name="Baehler J."/>
            <person name="Dixon L."/>
            <person name="Werner F."/>
        </authorList>
    </citation>
    <scope>ALTERNATIVE INITIATION</scope>
</reference>
<feature type="chain" id="PRO_0000373548" description="Transmembrane protein B169L">
    <location>
        <begin position="1"/>
        <end position="169"/>
    </location>
</feature>
<feature type="transmembrane region" description="Helical" evidence="1">
    <location>
        <begin position="28"/>
        <end position="48"/>
    </location>
</feature>
<feature type="transmembrane region" description="Helical" evidence="1">
    <location>
        <begin position="60"/>
        <end position="80"/>
    </location>
</feature>
<feature type="region of interest" description="Disordered" evidence="2">
    <location>
        <begin position="107"/>
        <end position="169"/>
    </location>
</feature>
<feature type="compositionally biased region" description="Low complexity" evidence="2">
    <location>
        <begin position="140"/>
        <end position="154"/>
    </location>
</feature>
<feature type="glycosylation site" description="N-linked (GlcNAc...) asparagine; by host" evidence="1">
    <location>
        <position position="88"/>
    </location>
</feature>
<feature type="splice variant" id="VSP_061333" description="In isoform 2." evidence="4">
    <location>
        <begin position="1"/>
        <end position="91"/>
    </location>
</feature>
<proteinExistence type="evidence at transcript level"/>
<organism>
    <name type="scientific">African swine fever virus (strain Badajoz 1971 Vero-adapted)</name>
    <name type="common">Ba71V</name>
    <name type="synonym">ASFV</name>
    <dbReference type="NCBI Taxonomy" id="10498"/>
    <lineage>
        <taxon>Viruses</taxon>
        <taxon>Varidnaviria</taxon>
        <taxon>Bamfordvirae</taxon>
        <taxon>Nucleocytoviricota</taxon>
        <taxon>Pokkesviricetes</taxon>
        <taxon>Asfuvirales</taxon>
        <taxon>Asfarviridae</taxon>
        <taxon>Asfivirus</taxon>
        <taxon>African swine fever virus</taxon>
    </lineage>
</organism>
<keyword id="KW-0024">Alternative initiation</keyword>
<keyword id="KW-0244">Early protein</keyword>
<keyword id="KW-0325">Glycoprotein</keyword>
<keyword id="KW-1043">Host membrane</keyword>
<keyword id="KW-0426">Late protein</keyword>
<keyword id="KW-0472">Membrane</keyword>
<keyword id="KW-1185">Reference proteome</keyword>
<keyword id="KW-0812">Transmembrane</keyword>
<keyword id="KW-1133">Transmembrane helix</keyword>
<keyword id="KW-0946">Virion</keyword>
<comment type="subcellular location">
    <subcellularLocation>
        <location evidence="5">Host membrane</location>
        <topology evidence="5">Multi-pass membrane protein</topology>
    </subcellularLocation>
    <subcellularLocation>
        <location evidence="3">Virion</location>
    </subcellularLocation>
</comment>
<comment type="alternative products">
    <event type="alternative initiation"/>
    <isoform>
        <id>Q65166-1</id>
        <name>1</name>
        <sequence type="displayed"/>
    </isoform>
    <isoform>
        <id>Q65166-2</id>
        <name>2</name>
        <sequence type="described" ref="VSP_061333"/>
    </isoform>
</comment>
<comment type="induction">
    <molecule>Isoform 1</molecule>
    <text evidence="4">Expressed in the late phase of the viral replicative cycle.</text>
</comment>
<comment type="induction">
    <molecule>Isoform 2</molecule>
    <text evidence="4">Expressed in the early phase of the viral replicative cycle.</text>
</comment>
<comment type="similarity">
    <text evidence="5">Belongs to the asfivirus B169L family.</text>
</comment>